<proteinExistence type="inferred from homology"/>
<organism>
    <name type="scientific">Rickettsia prowazekii (strain Madrid E)</name>
    <dbReference type="NCBI Taxonomy" id="272947"/>
    <lineage>
        <taxon>Bacteria</taxon>
        <taxon>Pseudomonadati</taxon>
        <taxon>Pseudomonadota</taxon>
        <taxon>Alphaproteobacteria</taxon>
        <taxon>Rickettsiales</taxon>
        <taxon>Rickettsiaceae</taxon>
        <taxon>Rickettsieae</taxon>
        <taxon>Rickettsia</taxon>
        <taxon>typhus group</taxon>
    </lineage>
</organism>
<reference key="1">
    <citation type="journal article" date="1998" name="Nature">
        <title>The genome sequence of Rickettsia prowazekii and the origin of mitochondria.</title>
        <authorList>
            <person name="Andersson S.G.E."/>
            <person name="Zomorodipour A."/>
            <person name="Andersson J.O."/>
            <person name="Sicheritz-Ponten T."/>
            <person name="Alsmark U.C.M."/>
            <person name="Podowski R.M."/>
            <person name="Naeslund A.K."/>
            <person name="Eriksson A.-S."/>
            <person name="Winkler H.H."/>
            <person name="Kurland C.G."/>
        </authorList>
    </citation>
    <scope>NUCLEOTIDE SEQUENCE [LARGE SCALE GENOMIC DNA]</scope>
    <source>
        <strain>Madrid E</strain>
    </source>
</reference>
<evidence type="ECO:0000255" key="1">
    <source>
        <dbReference type="HAMAP-Rule" id="MF_00236"/>
    </source>
</evidence>
<comment type="function">
    <text evidence="1">Part of the twin-arginine translocation (Tat) system that transports large folded proteins containing a characteristic twin-arginine motif in their signal peptide across membranes. TatA could form the protein-conducting channel of the Tat system.</text>
</comment>
<comment type="subunit">
    <text evidence="1">The Tat system comprises two distinct complexes: a TatABC complex, containing multiple copies of TatA, TatB and TatC subunits, and a separate TatA complex, containing only TatA subunits. Substrates initially bind to the TatABC complex, which probably triggers association of the separate TatA complex to form the active translocon.</text>
</comment>
<comment type="subcellular location">
    <subcellularLocation>
        <location evidence="1">Cell inner membrane</location>
        <topology evidence="1">Single-pass membrane protein</topology>
    </subcellularLocation>
</comment>
<comment type="similarity">
    <text evidence="1">Belongs to the TatA/E family.</text>
</comment>
<dbReference type="EMBL" id="AJ235273">
    <property type="protein sequence ID" value="CAA15177.1"/>
    <property type="molecule type" value="Genomic_DNA"/>
</dbReference>
<dbReference type="PIR" id="A71635">
    <property type="entry name" value="A71635"/>
</dbReference>
<dbReference type="RefSeq" id="NP_221101.1">
    <property type="nucleotide sequence ID" value="NC_000963.1"/>
</dbReference>
<dbReference type="RefSeq" id="WP_004597004.1">
    <property type="nucleotide sequence ID" value="NC_000963.1"/>
</dbReference>
<dbReference type="SMR" id="Q9ZCJ1"/>
<dbReference type="STRING" id="272947.gene:17555819"/>
<dbReference type="TCDB" id="2.A.64.1.8">
    <property type="family name" value="the twin arginine targeting (tat) family"/>
</dbReference>
<dbReference type="EnsemblBacteria" id="CAA15177">
    <property type="protein sequence ID" value="CAA15177"/>
    <property type="gene ID" value="CAA15177"/>
</dbReference>
<dbReference type="KEGG" id="rpr:RP749"/>
<dbReference type="PATRIC" id="fig|272947.5.peg.783"/>
<dbReference type="eggNOG" id="COG1826">
    <property type="taxonomic scope" value="Bacteria"/>
</dbReference>
<dbReference type="HOGENOM" id="CLU_086034_6_2_5"/>
<dbReference type="Proteomes" id="UP000002480">
    <property type="component" value="Chromosome"/>
</dbReference>
<dbReference type="GO" id="GO:0033281">
    <property type="term" value="C:TAT protein transport complex"/>
    <property type="evidence" value="ECO:0007669"/>
    <property type="project" value="UniProtKB-UniRule"/>
</dbReference>
<dbReference type="GO" id="GO:0008320">
    <property type="term" value="F:protein transmembrane transporter activity"/>
    <property type="evidence" value="ECO:0007669"/>
    <property type="project" value="UniProtKB-UniRule"/>
</dbReference>
<dbReference type="GO" id="GO:0043953">
    <property type="term" value="P:protein transport by the Tat complex"/>
    <property type="evidence" value="ECO:0007669"/>
    <property type="project" value="UniProtKB-UniRule"/>
</dbReference>
<dbReference type="Gene3D" id="1.20.5.3310">
    <property type="match status" value="1"/>
</dbReference>
<dbReference type="HAMAP" id="MF_00236">
    <property type="entry name" value="TatA_E"/>
    <property type="match status" value="1"/>
</dbReference>
<dbReference type="InterPro" id="IPR003369">
    <property type="entry name" value="TatA/B/E"/>
</dbReference>
<dbReference type="InterPro" id="IPR006312">
    <property type="entry name" value="TatA/E"/>
</dbReference>
<dbReference type="NCBIfam" id="NF002402">
    <property type="entry name" value="PRK01470.1"/>
    <property type="match status" value="1"/>
</dbReference>
<dbReference type="NCBIfam" id="TIGR01411">
    <property type="entry name" value="tatAE"/>
    <property type="match status" value="1"/>
</dbReference>
<dbReference type="PANTHER" id="PTHR42982">
    <property type="entry name" value="SEC-INDEPENDENT PROTEIN TRANSLOCASE PROTEIN TATA"/>
    <property type="match status" value="1"/>
</dbReference>
<dbReference type="PANTHER" id="PTHR42982:SF1">
    <property type="entry name" value="SEC-INDEPENDENT PROTEIN TRANSLOCASE PROTEIN TATA"/>
    <property type="match status" value="1"/>
</dbReference>
<dbReference type="Pfam" id="PF02416">
    <property type="entry name" value="TatA_B_E"/>
    <property type="match status" value="1"/>
</dbReference>
<protein>
    <recommendedName>
        <fullName evidence="1">Sec-independent protein translocase protein TatA</fullName>
    </recommendedName>
</protein>
<accession>Q9ZCJ1</accession>
<name>TATA_RICPR</name>
<feature type="chain" id="PRO_0000097957" description="Sec-independent protein translocase protein TatA">
    <location>
        <begin position="1"/>
        <end position="54"/>
    </location>
</feature>
<feature type="transmembrane region" description="Helical" evidence="1">
    <location>
        <begin position="1"/>
        <end position="21"/>
    </location>
</feature>
<sequence length="54" mass="5884">MGMSFSHLLIVLLIIFVLFGAGKLPQVMSDLAKGLKAFKEGMKDDGNDNDKTNN</sequence>
<gene>
    <name evidence="1" type="primary">tatA</name>
    <name type="ordered locus">RP749</name>
</gene>
<keyword id="KW-0997">Cell inner membrane</keyword>
<keyword id="KW-1003">Cell membrane</keyword>
<keyword id="KW-0472">Membrane</keyword>
<keyword id="KW-0653">Protein transport</keyword>
<keyword id="KW-1185">Reference proteome</keyword>
<keyword id="KW-0811">Translocation</keyword>
<keyword id="KW-0812">Transmembrane</keyword>
<keyword id="KW-1133">Transmembrane helix</keyword>
<keyword id="KW-0813">Transport</keyword>